<organism>
    <name type="scientific">Anaeromyxobacter sp. (strain K)</name>
    <dbReference type="NCBI Taxonomy" id="447217"/>
    <lineage>
        <taxon>Bacteria</taxon>
        <taxon>Pseudomonadati</taxon>
        <taxon>Myxococcota</taxon>
        <taxon>Myxococcia</taxon>
        <taxon>Myxococcales</taxon>
        <taxon>Cystobacterineae</taxon>
        <taxon>Anaeromyxobacteraceae</taxon>
        <taxon>Anaeromyxobacter</taxon>
    </lineage>
</organism>
<feature type="chain" id="PRO_1000090815" description="Cysteine--tRNA ligase">
    <location>
        <begin position="1"/>
        <end position="481"/>
    </location>
</feature>
<feature type="short sequence motif" description="'HIGH' region">
    <location>
        <begin position="31"/>
        <end position="41"/>
    </location>
</feature>
<feature type="short sequence motif" description="'KMSKS' region">
    <location>
        <begin position="272"/>
        <end position="276"/>
    </location>
</feature>
<feature type="binding site" evidence="1">
    <location>
        <position position="29"/>
    </location>
    <ligand>
        <name>Zn(2+)</name>
        <dbReference type="ChEBI" id="CHEBI:29105"/>
    </ligand>
</feature>
<feature type="binding site" evidence="1">
    <location>
        <position position="210"/>
    </location>
    <ligand>
        <name>Zn(2+)</name>
        <dbReference type="ChEBI" id="CHEBI:29105"/>
    </ligand>
</feature>
<feature type="binding site" evidence="1">
    <location>
        <position position="235"/>
    </location>
    <ligand>
        <name>Zn(2+)</name>
        <dbReference type="ChEBI" id="CHEBI:29105"/>
    </ligand>
</feature>
<feature type="binding site" evidence="1">
    <location>
        <position position="239"/>
    </location>
    <ligand>
        <name>Zn(2+)</name>
        <dbReference type="ChEBI" id="CHEBI:29105"/>
    </ligand>
</feature>
<feature type="binding site" evidence="1">
    <location>
        <position position="275"/>
    </location>
    <ligand>
        <name>ATP</name>
        <dbReference type="ChEBI" id="CHEBI:30616"/>
    </ligand>
</feature>
<gene>
    <name evidence="1" type="primary">cysS</name>
    <name type="ordered locus">AnaeK_2590</name>
</gene>
<name>SYC_ANASK</name>
<accession>B4UGC3</accession>
<proteinExistence type="inferred from homology"/>
<reference key="1">
    <citation type="submission" date="2008-08" db="EMBL/GenBank/DDBJ databases">
        <title>Complete sequence of Anaeromyxobacter sp. K.</title>
        <authorList>
            <consortium name="US DOE Joint Genome Institute"/>
            <person name="Lucas S."/>
            <person name="Copeland A."/>
            <person name="Lapidus A."/>
            <person name="Glavina del Rio T."/>
            <person name="Dalin E."/>
            <person name="Tice H."/>
            <person name="Bruce D."/>
            <person name="Goodwin L."/>
            <person name="Pitluck S."/>
            <person name="Saunders E."/>
            <person name="Brettin T."/>
            <person name="Detter J.C."/>
            <person name="Han C."/>
            <person name="Larimer F."/>
            <person name="Land M."/>
            <person name="Hauser L."/>
            <person name="Kyrpides N."/>
            <person name="Ovchinnikiva G."/>
            <person name="Beliaev A."/>
        </authorList>
    </citation>
    <scope>NUCLEOTIDE SEQUENCE [LARGE SCALE GENOMIC DNA]</scope>
    <source>
        <strain>K</strain>
    </source>
</reference>
<evidence type="ECO:0000255" key="1">
    <source>
        <dbReference type="HAMAP-Rule" id="MF_00041"/>
    </source>
</evidence>
<keyword id="KW-0030">Aminoacyl-tRNA synthetase</keyword>
<keyword id="KW-0067">ATP-binding</keyword>
<keyword id="KW-0963">Cytoplasm</keyword>
<keyword id="KW-0436">Ligase</keyword>
<keyword id="KW-0479">Metal-binding</keyword>
<keyword id="KW-0547">Nucleotide-binding</keyword>
<keyword id="KW-0648">Protein biosynthesis</keyword>
<keyword id="KW-0862">Zinc</keyword>
<dbReference type="EC" id="6.1.1.16" evidence="1"/>
<dbReference type="EMBL" id="CP001131">
    <property type="protein sequence ID" value="ACG73815.1"/>
    <property type="molecule type" value="Genomic_DNA"/>
</dbReference>
<dbReference type="RefSeq" id="WP_012526598.1">
    <property type="nucleotide sequence ID" value="NC_011145.1"/>
</dbReference>
<dbReference type="SMR" id="B4UGC3"/>
<dbReference type="KEGG" id="ank:AnaeK_2590"/>
<dbReference type="HOGENOM" id="CLU_013528_0_1_7"/>
<dbReference type="OrthoDB" id="9815130at2"/>
<dbReference type="Proteomes" id="UP000001871">
    <property type="component" value="Chromosome"/>
</dbReference>
<dbReference type="GO" id="GO:0005829">
    <property type="term" value="C:cytosol"/>
    <property type="evidence" value="ECO:0007669"/>
    <property type="project" value="TreeGrafter"/>
</dbReference>
<dbReference type="GO" id="GO:0005524">
    <property type="term" value="F:ATP binding"/>
    <property type="evidence" value="ECO:0007669"/>
    <property type="project" value="UniProtKB-UniRule"/>
</dbReference>
<dbReference type="GO" id="GO:0004817">
    <property type="term" value="F:cysteine-tRNA ligase activity"/>
    <property type="evidence" value="ECO:0007669"/>
    <property type="project" value="UniProtKB-UniRule"/>
</dbReference>
<dbReference type="GO" id="GO:0008270">
    <property type="term" value="F:zinc ion binding"/>
    <property type="evidence" value="ECO:0007669"/>
    <property type="project" value="UniProtKB-UniRule"/>
</dbReference>
<dbReference type="GO" id="GO:0006423">
    <property type="term" value="P:cysteinyl-tRNA aminoacylation"/>
    <property type="evidence" value="ECO:0007669"/>
    <property type="project" value="UniProtKB-UniRule"/>
</dbReference>
<dbReference type="CDD" id="cd00672">
    <property type="entry name" value="CysRS_core"/>
    <property type="match status" value="1"/>
</dbReference>
<dbReference type="FunFam" id="3.40.50.620:FF:000009">
    <property type="entry name" value="Cysteine--tRNA ligase"/>
    <property type="match status" value="1"/>
</dbReference>
<dbReference type="Gene3D" id="1.20.120.1910">
    <property type="entry name" value="Cysteine-tRNA ligase, C-terminal anti-codon recognition domain"/>
    <property type="match status" value="1"/>
</dbReference>
<dbReference type="Gene3D" id="3.40.50.620">
    <property type="entry name" value="HUPs"/>
    <property type="match status" value="1"/>
</dbReference>
<dbReference type="HAMAP" id="MF_00041">
    <property type="entry name" value="Cys_tRNA_synth"/>
    <property type="match status" value="1"/>
</dbReference>
<dbReference type="InterPro" id="IPR015803">
    <property type="entry name" value="Cys-tRNA-ligase"/>
</dbReference>
<dbReference type="InterPro" id="IPR015273">
    <property type="entry name" value="Cys-tRNA-synt_Ia_DALR"/>
</dbReference>
<dbReference type="InterPro" id="IPR024909">
    <property type="entry name" value="Cys-tRNA/MSH_ligase"/>
</dbReference>
<dbReference type="InterPro" id="IPR056411">
    <property type="entry name" value="CysS_C"/>
</dbReference>
<dbReference type="InterPro" id="IPR014729">
    <property type="entry name" value="Rossmann-like_a/b/a_fold"/>
</dbReference>
<dbReference type="InterPro" id="IPR032678">
    <property type="entry name" value="tRNA-synt_1_cat_dom"/>
</dbReference>
<dbReference type="InterPro" id="IPR009080">
    <property type="entry name" value="tRNAsynth_Ia_anticodon-bd"/>
</dbReference>
<dbReference type="NCBIfam" id="TIGR00435">
    <property type="entry name" value="cysS"/>
    <property type="match status" value="1"/>
</dbReference>
<dbReference type="PANTHER" id="PTHR10890:SF3">
    <property type="entry name" value="CYSTEINE--TRNA LIGASE, CYTOPLASMIC"/>
    <property type="match status" value="1"/>
</dbReference>
<dbReference type="PANTHER" id="PTHR10890">
    <property type="entry name" value="CYSTEINYL-TRNA SYNTHETASE"/>
    <property type="match status" value="1"/>
</dbReference>
<dbReference type="Pfam" id="PF23493">
    <property type="entry name" value="CysS_C"/>
    <property type="match status" value="1"/>
</dbReference>
<dbReference type="Pfam" id="PF09190">
    <property type="entry name" value="DALR_2"/>
    <property type="match status" value="1"/>
</dbReference>
<dbReference type="Pfam" id="PF01406">
    <property type="entry name" value="tRNA-synt_1e"/>
    <property type="match status" value="1"/>
</dbReference>
<dbReference type="PRINTS" id="PR00983">
    <property type="entry name" value="TRNASYNTHCYS"/>
</dbReference>
<dbReference type="SMART" id="SM00840">
    <property type="entry name" value="DALR_2"/>
    <property type="match status" value="1"/>
</dbReference>
<dbReference type="SUPFAM" id="SSF47323">
    <property type="entry name" value="Anticodon-binding domain of a subclass of class I aminoacyl-tRNA synthetases"/>
    <property type="match status" value="1"/>
</dbReference>
<dbReference type="SUPFAM" id="SSF52374">
    <property type="entry name" value="Nucleotidylyl transferase"/>
    <property type="match status" value="1"/>
</dbReference>
<sequence>MSIQVHDTLTAQKRELVPLEPGKLRLYVCGPTVYDYSHLGHARCYVVWDVVVRHLRARGLEVRFVRNFTDVDDKIIQRANERGEDPIALASRFADAFHEDMDALGNLRPDVEPRVSGHIPEIVALIARLVERGFAYAPGNGDVYYAVRKFPEYGRLSKRNLDDLIAGARVEPGEAKRDPLDFALWKAAKPGEPAWESPWGKGRPGWHIECSAMTQKHLGAPIDLHAGGKDLVFPHHTNEIAQSVAATSDGLHAEDFARYWMHNGFVQIDDEKMSKSLGNFFTIRDVLARFDGEALRFFLLGTHYRRDFNFSDQVLAEAERRLSALYETVEKAERLGAGAAPAAEPAFVERARAALDDDFNTPQVLGIVAEAFTEANALADRKGKKSPEEKARLAAFARGARAVGAVLGILDRPPAQALSAIRDRAAARRGIDGGEVERSIAERAAARAAKDFARSDAIRDALLARGVVLMDGPQGTTWKVE</sequence>
<comment type="catalytic activity">
    <reaction evidence="1">
        <text>tRNA(Cys) + L-cysteine + ATP = L-cysteinyl-tRNA(Cys) + AMP + diphosphate</text>
        <dbReference type="Rhea" id="RHEA:17773"/>
        <dbReference type="Rhea" id="RHEA-COMP:9661"/>
        <dbReference type="Rhea" id="RHEA-COMP:9679"/>
        <dbReference type="ChEBI" id="CHEBI:30616"/>
        <dbReference type="ChEBI" id="CHEBI:33019"/>
        <dbReference type="ChEBI" id="CHEBI:35235"/>
        <dbReference type="ChEBI" id="CHEBI:78442"/>
        <dbReference type="ChEBI" id="CHEBI:78517"/>
        <dbReference type="ChEBI" id="CHEBI:456215"/>
        <dbReference type="EC" id="6.1.1.16"/>
    </reaction>
</comment>
<comment type="cofactor">
    <cofactor evidence="1">
        <name>Zn(2+)</name>
        <dbReference type="ChEBI" id="CHEBI:29105"/>
    </cofactor>
    <text evidence="1">Binds 1 zinc ion per subunit.</text>
</comment>
<comment type="subunit">
    <text evidence="1">Monomer.</text>
</comment>
<comment type="subcellular location">
    <subcellularLocation>
        <location evidence="1">Cytoplasm</location>
    </subcellularLocation>
</comment>
<comment type="similarity">
    <text evidence="1">Belongs to the class-I aminoacyl-tRNA synthetase family.</text>
</comment>
<protein>
    <recommendedName>
        <fullName evidence="1">Cysteine--tRNA ligase</fullName>
        <ecNumber evidence="1">6.1.1.16</ecNumber>
    </recommendedName>
    <alternativeName>
        <fullName evidence="1">Cysteinyl-tRNA synthetase</fullName>
        <shortName evidence="1">CysRS</shortName>
    </alternativeName>
</protein>